<gene>
    <name type="primary">Dnajc8</name>
</gene>
<feature type="initiator methionine" description="Removed" evidence="1">
    <location>
        <position position="1"/>
    </location>
</feature>
<feature type="chain" id="PRO_0000071061" description="DnaJ homolog subfamily C member 8">
    <location>
        <begin position="2"/>
        <end position="253"/>
    </location>
</feature>
<feature type="domain" description="J" evidence="2">
    <location>
        <begin position="57"/>
        <end position="124"/>
    </location>
</feature>
<feature type="region of interest" description="Disordered" evidence="3">
    <location>
        <begin position="181"/>
        <end position="253"/>
    </location>
</feature>
<feature type="region of interest" description="Essential for polyglutamine aggregation suppression" evidence="1">
    <location>
        <begin position="232"/>
        <end position="253"/>
    </location>
</feature>
<feature type="short sequence motif" description="Nuclear localization signal" evidence="1">
    <location>
        <begin position="189"/>
        <end position="192"/>
    </location>
</feature>
<feature type="short sequence motif" description="Nuclear localization signal" evidence="1">
    <location>
        <begin position="203"/>
        <end position="206"/>
    </location>
</feature>
<feature type="compositionally biased region" description="Basic and acidic residues" evidence="3">
    <location>
        <begin position="181"/>
        <end position="222"/>
    </location>
</feature>
<feature type="compositionally biased region" description="Basic residues" evidence="3">
    <location>
        <begin position="231"/>
        <end position="240"/>
    </location>
</feature>
<feature type="modified residue" description="N-acetylalanine" evidence="1">
    <location>
        <position position="2"/>
    </location>
</feature>
<feature type="modified residue" description="Phosphoserine" evidence="1">
    <location>
        <position position="35"/>
    </location>
</feature>
<feature type="modified residue" description="N6-acetyllysine" evidence="1">
    <location>
        <position position="146"/>
    </location>
</feature>
<feature type="modified residue" description="Phosphoserine" evidence="1">
    <location>
        <position position="222"/>
    </location>
</feature>
<feature type="sequence conflict" description="In Ref. 1; BAC40283." evidence="4" ref="1">
    <original>E</original>
    <variation>G</variation>
    <location>
        <position position="151"/>
    </location>
</feature>
<proteinExistence type="evidence at protein level"/>
<reference key="1">
    <citation type="journal article" date="2005" name="Science">
        <title>The transcriptional landscape of the mammalian genome.</title>
        <authorList>
            <person name="Carninci P."/>
            <person name="Kasukawa T."/>
            <person name="Katayama S."/>
            <person name="Gough J."/>
            <person name="Frith M.C."/>
            <person name="Maeda N."/>
            <person name="Oyama R."/>
            <person name="Ravasi T."/>
            <person name="Lenhard B."/>
            <person name="Wells C."/>
            <person name="Kodzius R."/>
            <person name="Shimokawa K."/>
            <person name="Bajic V.B."/>
            <person name="Brenner S.E."/>
            <person name="Batalov S."/>
            <person name="Forrest A.R."/>
            <person name="Zavolan M."/>
            <person name="Davis M.J."/>
            <person name="Wilming L.G."/>
            <person name="Aidinis V."/>
            <person name="Allen J.E."/>
            <person name="Ambesi-Impiombato A."/>
            <person name="Apweiler R."/>
            <person name="Aturaliya R.N."/>
            <person name="Bailey T.L."/>
            <person name="Bansal M."/>
            <person name="Baxter L."/>
            <person name="Beisel K.W."/>
            <person name="Bersano T."/>
            <person name="Bono H."/>
            <person name="Chalk A.M."/>
            <person name="Chiu K.P."/>
            <person name="Choudhary V."/>
            <person name="Christoffels A."/>
            <person name="Clutterbuck D.R."/>
            <person name="Crowe M.L."/>
            <person name="Dalla E."/>
            <person name="Dalrymple B.P."/>
            <person name="de Bono B."/>
            <person name="Della Gatta G."/>
            <person name="di Bernardo D."/>
            <person name="Down T."/>
            <person name="Engstrom P."/>
            <person name="Fagiolini M."/>
            <person name="Faulkner G."/>
            <person name="Fletcher C.F."/>
            <person name="Fukushima T."/>
            <person name="Furuno M."/>
            <person name="Futaki S."/>
            <person name="Gariboldi M."/>
            <person name="Georgii-Hemming P."/>
            <person name="Gingeras T.R."/>
            <person name="Gojobori T."/>
            <person name="Green R.E."/>
            <person name="Gustincich S."/>
            <person name="Harbers M."/>
            <person name="Hayashi Y."/>
            <person name="Hensch T.K."/>
            <person name="Hirokawa N."/>
            <person name="Hill D."/>
            <person name="Huminiecki L."/>
            <person name="Iacono M."/>
            <person name="Ikeo K."/>
            <person name="Iwama A."/>
            <person name="Ishikawa T."/>
            <person name="Jakt M."/>
            <person name="Kanapin A."/>
            <person name="Katoh M."/>
            <person name="Kawasawa Y."/>
            <person name="Kelso J."/>
            <person name="Kitamura H."/>
            <person name="Kitano H."/>
            <person name="Kollias G."/>
            <person name="Krishnan S.P."/>
            <person name="Kruger A."/>
            <person name="Kummerfeld S.K."/>
            <person name="Kurochkin I.V."/>
            <person name="Lareau L.F."/>
            <person name="Lazarevic D."/>
            <person name="Lipovich L."/>
            <person name="Liu J."/>
            <person name="Liuni S."/>
            <person name="McWilliam S."/>
            <person name="Madan Babu M."/>
            <person name="Madera M."/>
            <person name="Marchionni L."/>
            <person name="Matsuda H."/>
            <person name="Matsuzawa S."/>
            <person name="Miki H."/>
            <person name="Mignone F."/>
            <person name="Miyake S."/>
            <person name="Morris K."/>
            <person name="Mottagui-Tabar S."/>
            <person name="Mulder N."/>
            <person name="Nakano N."/>
            <person name="Nakauchi H."/>
            <person name="Ng P."/>
            <person name="Nilsson R."/>
            <person name="Nishiguchi S."/>
            <person name="Nishikawa S."/>
            <person name="Nori F."/>
            <person name="Ohara O."/>
            <person name="Okazaki Y."/>
            <person name="Orlando V."/>
            <person name="Pang K.C."/>
            <person name="Pavan W.J."/>
            <person name="Pavesi G."/>
            <person name="Pesole G."/>
            <person name="Petrovsky N."/>
            <person name="Piazza S."/>
            <person name="Reed J."/>
            <person name="Reid J.F."/>
            <person name="Ring B.Z."/>
            <person name="Ringwald M."/>
            <person name="Rost B."/>
            <person name="Ruan Y."/>
            <person name="Salzberg S.L."/>
            <person name="Sandelin A."/>
            <person name="Schneider C."/>
            <person name="Schoenbach C."/>
            <person name="Sekiguchi K."/>
            <person name="Semple C.A."/>
            <person name="Seno S."/>
            <person name="Sessa L."/>
            <person name="Sheng Y."/>
            <person name="Shibata Y."/>
            <person name="Shimada H."/>
            <person name="Shimada K."/>
            <person name="Silva D."/>
            <person name="Sinclair B."/>
            <person name="Sperling S."/>
            <person name="Stupka E."/>
            <person name="Sugiura K."/>
            <person name="Sultana R."/>
            <person name="Takenaka Y."/>
            <person name="Taki K."/>
            <person name="Tammoja K."/>
            <person name="Tan S.L."/>
            <person name="Tang S."/>
            <person name="Taylor M.S."/>
            <person name="Tegner J."/>
            <person name="Teichmann S.A."/>
            <person name="Ueda H.R."/>
            <person name="van Nimwegen E."/>
            <person name="Verardo R."/>
            <person name="Wei C.L."/>
            <person name="Yagi K."/>
            <person name="Yamanishi H."/>
            <person name="Zabarovsky E."/>
            <person name="Zhu S."/>
            <person name="Zimmer A."/>
            <person name="Hide W."/>
            <person name="Bult C."/>
            <person name="Grimmond S.M."/>
            <person name="Teasdale R.D."/>
            <person name="Liu E.T."/>
            <person name="Brusic V."/>
            <person name="Quackenbush J."/>
            <person name="Wahlestedt C."/>
            <person name="Mattick J.S."/>
            <person name="Hume D.A."/>
            <person name="Kai C."/>
            <person name="Sasaki D."/>
            <person name="Tomaru Y."/>
            <person name="Fukuda S."/>
            <person name="Kanamori-Katayama M."/>
            <person name="Suzuki M."/>
            <person name="Aoki J."/>
            <person name="Arakawa T."/>
            <person name="Iida J."/>
            <person name="Imamura K."/>
            <person name="Itoh M."/>
            <person name="Kato T."/>
            <person name="Kawaji H."/>
            <person name="Kawagashira N."/>
            <person name="Kawashima T."/>
            <person name="Kojima M."/>
            <person name="Kondo S."/>
            <person name="Konno H."/>
            <person name="Nakano K."/>
            <person name="Ninomiya N."/>
            <person name="Nishio T."/>
            <person name="Okada M."/>
            <person name="Plessy C."/>
            <person name="Shibata K."/>
            <person name="Shiraki T."/>
            <person name="Suzuki S."/>
            <person name="Tagami M."/>
            <person name="Waki K."/>
            <person name="Watahiki A."/>
            <person name="Okamura-Oho Y."/>
            <person name="Suzuki H."/>
            <person name="Kawai J."/>
            <person name="Hayashizaki Y."/>
        </authorList>
    </citation>
    <scope>NUCLEOTIDE SEQUENCE [LARGE SCALE MRNA]</scope>
    <source>
        <strain>NOD</strain>
        <tissue>Thymus</tissue>
    </source>
</reference>
<reference key="2">
    <citation type="journal article" date="2004" name="Genome Res.">
        <title>The status, quality, and expansion of the NIH full-length cDNA project: the Mammalian Gene Collection (MGC).</title>
        <authorList>
            <consortium name="The MGC Project Team"/>
        </authorList>
    </citation>
    <scope>NUCLEOTIDE SEQUENCE [LARGE SCALE MRNA]</scope>
    <source>
        <strain>C57BL/6J</strain>
        <tissue>Embryonic germ cell</tissue>
        <tissue>Mammary gland</tissue>
    </source>
</reference>
<reference key="3">
    <citation type="journal article" date="2010" name="Cell">
        <title>A tissue-specific atlas of mouse protein phosphorylation and expression.</title>
        <authorList>
            <person name="Huttlin E.L."/>
            <person name="Jedrychowski M.P."/>
            <person name="Elias J.E."/>
            <person name="Goswami T."/>
            <person name="Rad R."/>
            <person name="Beausoleil S.A."/>
            <person name="Villen J."/>
            <person name="Haas W."/>
            <person name="Sowa M.E."/>
            <person name="Gygi S.P."/>
        </authorList>
    </citation>
    <scope>IDENTIFICATION BY MASS SPECTROMETRY [LARGE SCALE ANALYSIS]</scope>
    <source>
        <tissue>Brain</tissue>
        <tissue>Brown adipose tissue</tissue>
        <tissue>Kidney</tissue>
        <tissue>Liver</tissue>
        <tissue>Lung</tissue>
        <tissue>Pancreas</tissue>
        <tissue>Spleen</tissue>
        <tissue>Testis</tissue>
    </source>
</reference>
<protein>
    <recommendedName>
        <fullName>DnaJ homolog subfamily C member 8</fullName>
    </recommendedName>
</protein>
<sequence length="253" mass="29813">MAASGESGASGGGGSTEEAFMTFYSEVKQIEKRDSVLTSKNQIERLTRPGSSYFNLNPFEVLQIDPEVTDEEIKKRFRQLSILVHPDKNQDDADRAQKAFEAVDKAYKLLLDQEQKKRALDVIQAGKEYVEHTVKERKKQLKKEGKPTNVEEDDPELFKQAVYKQTMKLFAELEIKRKEREAKEMHERKRQREEEIEAQEKAKREREWQKNFEESRDGRVDSWRNFQANTKGKKEKKNRTFLRPPKVKMEQRE</sequence>
<organism>
    <name type="scientific">Mus musculus</name>
    <name type="common">Mouse</name>
    <dbReference type="NCBI Taxonomy" id="10090"/>
    <lineage>
        <taxon>Eukaryota</taxon>
        <taxon>Metazoa</taxon>
        <taxon>Chordata</taxon>
        <taxon>Craniata</taxon>
        <taxon>Vertebrata</taxon>
        <taxon>Euteleostomi</taxon>
        <taxon>Mammalia</taxon>
        <taxon>Eutheria</taxon>
        <taxon>Euarchontoglires</taxon>
        <taxon>Glires</taxon>
        <taxon>Rodentia</taxon>
        <taxon>Myomorpha</taxon>
        <taxon>Muroidea</taxon>
        <taxon>Muridae</taxon>
        <taxon>Murinae</taxon>
        <taxon>Mus</taxon>
        <taxon>Mus</taxon>
    </lineage>
</organism>
<evidence type="ECO:0000250" key="1">
    <source>
        <dbReference type="UniProtKB" id="O75937"/>
    </source>
</evidence>
<evidence type="ECO:0000255" key="2">
    <source>
        <dbReference type="PROSITE-ProRule" id="PRU00286"/>
    </source>
</evidence>
<evidence type="ECO:0000256" key="3">
    <source>
        <dbReference type="SAM" id="MobiDB-lite"/>
    </source>
</evidence>
<evidence type="ECO:0000305" key="4"/>
<name>DNJC8_MOUSE</name>
<comment type="function">
    <text evidence="1">Suppresses polyglutamine (polyQ) aggregation of ATXN3 in neuronal cells.</text>
</comment>
<comment type="subunit">
    <text evidence="1">Interacts with SRPK1. Interacts with HSP70 (HSPA1A or HSPA1B).</text>
</comment>
<comment type="subcellular location">
    <subcellularLocation>
        <location evidence="1">Nucleus</location>
    </subcellularLocation>
</comment>
<comment type="sequence caution" evidence="4">
    <conflict type="frameshift">
        <sequence resource="EMBL-CDS" id="BAC40283"/>
    </conflict>
</comment>
<keyword id="KW-0007">Acetylation</keyword>
<keyword id="KW-0143">Chaperone</keyword>
<keyword id="KW-0539">Nucleus</keyword>
<keyword id="KW-0597">Phosphoprotein</keyword>
<keyword id="KW-1185">Reference proteome</keyword>
<accession>Q6NZB0</accession>
<accession>Q6PG72</accession>
<accession>Q8C2M6</accession>
<dbReference type="EMBL" id="AK088325">
    <property type="protein sequence ID" value="BAC40283.1"/>
    <property type="status" value="ALT_FRAME"/>
    <property type="molecule type" value="mRNA"/>
</dbReference>
<dbReference type="EMBL" id="BC057191">
    <property type="protein sequence ID" value="AAH57191.1"/>
    <property type="molecule type" value="mRNA"/>
</dbReference>
<dbReference type="EMBL" id="BC066222">
    <property type="protein sequence ID" value="AAH66222.2"/>
    <property type="molecule type" value="mRNA"/>
</dbReference>
<dbReference type="CCDS" id="CCDS51319.1"/>
<dbReference type="RefSeq" id="NP_765988.2">
    <property type="nucleotide sequence ID" value="NM_172400.3"/>
</dbReference>
<dbReference type="SMR" id="Q6NZB0"/>
<dbReference type="BioGRID" id="212944">
    <property type="interactions" value="14"/>
</dbReference>
<dbReference type="FunCoup" id="Q6NZB0">
    <property type="interactions" value="4687"/>
</dbReference>
<dbReference type="STRING" id="10090.ENSMUSP00000092242"/>
<dbReference type="iPTMnet" id="Q6NZB0"/>
<dbReference type="PhosphoSitePlus" id="Q6NZB0"/>
<dbReference type="jPOST" id="Q6NZB0"/>
<dbReference type="PaxDb" id="10090-ENSMUSP00000092242"/>
<dbReference type="ProteomicsDB" id="279460"/>
<dbReference type="Pumba" id="Q6NZB0"/>
<dbReference type="Antibodypedia" id="30906">
    <property type="antibodies" value="90 antibodies from 22 providers"/>
</dbReference>
<dbReference type="DNASU" id="68598"/>
<dbReference type="Ensembl" id="ENSMUST00000094657.10">
    <property type="protein sequence ID" value="ENSMUSP00000092242.4"/>
    <property type="gene ID" value="ENSMUSG00000054405.15"/>
</dbReference>
<dbReference type="GeneID" id="68598"/>
<dbReference type="KEGG" id="mmu:68598"/>
<dbReference type="UCSC" id="uc012dmi.1">
    <property type="organism name" value="mouse"/>
</dbReference>
<dbReference type="AGR" id="MGI:1915848"/>
<dbReference type="CTD" id="22826"/>
<dbReference type="MGI" id="MGI:1915848">
    <property type="gene designation" value="Dnajc8"/>
</dbReference>
<dbReference type="VEuPathDB" id="HostDB:ENSMUSG00000054405"/>
<dbReference type="eggNOG" id="KOG1150">
    <property type="taxonomic scope" value="Eukaryota"/>
</dbReference>
<dbReference type="GeneTree" id="ENSGT00390000012569"/>
<dbReference type="InParanoid" id="Q6NZB0"/>
<dbReference type="OMA" id="EIVNKAW"/>
<dbReference type="PhylomeDB" id="Q6NZB0"/>
<dbReference type="TreeFam" id="TF105167"/>
<dbReference type="BioGRID-ORCS" id="68598">
    <property type="hits" value="22 hits in 80 CRISPR screens"/>
</dbReference>
<dbReference type="ChiTaRS" id="Dnajc8">
    <property type="organism name" value="mouse"/>
</dbReference>
<dbReference type="PRO" id="PR:Q6NZB0"/>
<dbReference type="Proteomes" id="UP000000589">
    <property type="component" value="Chromosome 4"/>
</dbReference>
<dbReference type="RNAct" id="Q6NZB0">
    <property type="molecule type" value="protein"/>
</dbReference>
<dbReference type="Bgee" id="ENSMUSG00000054405">
    <property type="expression patterns" value="Expressed in otic placode and 264 other cell types or tissues"/>
</dbReference>
<dbReference type="ExpressionAtlas" id="Q6NZB0">
    <property type="expression patterns" value="baseline and differential"/>
</dbReference>
<dbReference type="GO" id="GO:0005829">
    <property type="term" value="C:cytosol"/>
    <property type="evidence" value="ECO:0007669"/>
    <property type="project" value="Ensembl"/>
</dbReference>
<dbReference type="GO" id="GO:0045171">
    <property type="term" value="C:intercellular bridge"/>
    <property type="evidence" value="ECO:0007669"/>
    <property type="project" value="Ensembl"/>
</dbReference>
<dbReference type="GO" id="GO:0005654">
    <property type="term" value="C:nucleoplasm"/>
    <property type="evidence" value="ECO:0007669"/>
    <property type="project" value="Ensembl"/>
</dbReference>
<dbReference type="GO" id="GO:0005634">
    <property type="term" value="C:nucleus"/>
    <property type="evidence" value="ECO:0000250"/>
    <property type="project" value="UniProtKB"/>
</dbReference>
<dbReference type="GO" id="GO:0030544">
    <property type="term" value="F:Hsp70 protein binding"/>
    <property type="evidence" value="ECO:0007669"/>
    <property type="project" value="Ensembl"/>
</dbReference>
<dbReference type="CDD" id="cd06257">
    <property type="entry name" value="DnaJ"/>
    <property type="match status" value="1"/>
</dbReference>
<dbReference type="FunFam" id="1.10.287.110:FF:000026">
    <property type="entry name" value="dnaJ homolog subfamily C member 8"/>
    <property type="match status" value="1"/>
</dbReference>
<dbReference type="Gene3D" id="1.10.287.110">
    <property type="entry name" value="DnaJ domain"/>
    <property type="match status" value="1"/>
</dbReference>
<dbReference type="InterPro" id="IPR001623">
    <property type="entry name" value="DnaJ_domain"/>
</dbReference>
<dbReference type="InterPro" id="IPR042858">
    <property type="entry name" value="DNAJC8"/>
</dbReference>
<dbReference type="InterPro" id="IPR036869">
    <property type="entry name" value="J_dom_sf"/>
</dbReference>
<dbReference type="PANTHER" id="PTHR15606:SF4">
    <property type="entry name" value="DNAJ HOMOLOG SUBFAMILY C MEMBER 8"/>
    <property type="match status" value="1"/>
</dbReference>
<dbReference type="PANTHER" id="PTHR15606">
    <property type="entry name" value="DNAJ HOMOLOG SUBFAMILY C MEMBER 8/LIPOPOLYSACCHARIDE SPECIFIC RESPONSE-7-RELATED"/>
    <property type="match status" value="1"/>
</dbReference>
<dbReference type="Pfam" id="PF00226">
    <property type="entry name" value="DnaJ"/>
    <property type="match status" value="1"/>
</dbReference>
<dbReference type="PRINTS" id="PR00625">
    <property type="entry name" value="JDOMAIN"/>
</dbReference>
<dbReference type="SMART" id="SM00271">
    <property type="entry name" value="DnaJ"/>
    <property type="match status" value="1"/>
</dbReference>
<dbReference type="SUPFAM" id="SSF46565">
    <property type="entry name" value="Chaperone J-domain"/>
    <property type="match status" value="1"/>
</dbReference>
<dbReference type="PROSITE" id="PS50076">
    <property type="entry name" value="DNAJ_2"/>
    <property type="match status" value="1"/>
</dbReference>